<proteinExistence type="evidence at protein level"/>
<feature type="chain" id="PRO_0000238553" description="Transcription elongation factor spt4">
    <location>
        <begin position="1"/>
        <end position="105"/>
    </location>
</feature>
<evidence type="ECO:0000250" key="1"/>
<evidence type="ECO:0000305" key="2"/>
<protein>
    <recommendedName>
        <fullName>Transcription elongation factor spt4</fullName>
    </recommendedName>
    <alternativeName>
        <fullName>Chromatin elongation factor spt4</fullName>
    </alternativeName>
</protein>
<dbReference type="EMBL" id="CU329671">
    <property type="protein sequence ID" value="CAB76052.1"/>
    <property type="molecule type" value="Genomic_DNA"/>
</dbReference>
<dbReference type="PIR" id="T50360">
    <property type="entry name" value="T50360"/>
</dbReference>
<dbReference type="RefSeq" id="NP_596596.1">
    <property type="nucleotide sequence ID" value="NM_001022516.2"/>
</dbReference>
<dbReference type="SMR" id="Q9P7K8"/>
<dbReference type="BioGRID" id="277224">
    <property type="interactions" value="3"/>
</dbReference>
<dbReference type="FunCoup" id="Q9P7K8">
    <property type="interactions" value="332"/>
</dbReference>
<dbReference type="STRING" id="284812.Q9P7K8"/>
<dbReference type="iPTMnet" id="Q9P7K8"/>
<dbReference type="PaxDb" id="4896-SPBC21C3.16c.1"/>
<dbReference type="EnsemblFungi" id="SPBC21C3.16c.1">
    <property type="protein sequence ID" value="SPBC21C3.16c.1:pep"/>
    <property type="gene ID" value="SPBC21C3.16c"/>
</dbReference>
<dbReference type="GeneID" id="2540700"/>
<dbReference type="KEGG" id="spo:2540700"/>
<dbReference type="PomBase" id="SPBC21C3.16c">
    <property type="gene designation" value="spt4"/>
</dbReference>
<dbReference type="VEuPathDB" id="FungiDB:SPBC21C3.16c"/>
<dbReference type="eggNOG" id="KOG3490">
    <property type="taxonomic scope" value="Eukaryota"/>
</dbReference>
<dbReference type="HOGENOM" id="CLU_138052_2_0_1"/>
<dbReference type="InParanoid" id="Q9P7K8"/>
<dbReference type="OMA" id="NCKNANS"/>
<dbReference type="PhylomeDB" id="Q9P7K8"/>
<dbReference type="Reactome" id="R-SPO-113418">
    <property type="pathway name" value="Formation of the Early Elongation Complex"/>
</dbReference>
<dbReference type="Reactome" id="R-SPO-674695">
    <property type="pathway name" value="RNA Polymerase II Pre-transcription Events"/>
</dbReference>
<dbReference type="Reactome" id="R-SPO-6796648">
    <property type="pathway name" value="TP53 Regulates Transcription of DNA Repair Genes"/>
</dbReference>
<dbReference type="PRO" id="PR:Q9P7K8"/>
<dbReference type="Proteomes" id="UP000002485">
    <property type="component" value="Chromosome II"/>
</dbReference>
<dbReference type="GO" id="GO:0000785">
    <property type="term" value="C:chromatin"/>
    <property type="evidence" value="ECO:0000305"/>
    <property type="project" value="PomBase"/>
</dbReference>
<dbReference type="GO" id="GO:0000775">
    <property type="term" value="C:chromosome, centromeric region"/>
    <property type="evidence" value="ECO:0007669"/>
    <property type="project" value="UniProtKB-SubCell"/>
</dbReference>
<dbReference type="GO" id="GO:0005829">
    <property type="term" value="C:cytosol"/>
    <property type="evidence" value="ECO:0007005"/>
    <property type="project" value="PomBase"/>
</dbReference>
<dbReference type="GO" id="GO:0032044">
    <property type="term" value="C:DSIF complex"/>
    <property type="evidence" value="ECO:0000314"/>
    <property type="project" value="PomBase"/>
</dbReference>
<dbReference type="GO" id="GO:0005634">
    <property type="term" value="C:nucleus"/>
    <property type="evidence" value="ECO:0007005"/>
    <property type="project" value="PomBase"/>
</dbReference>
<dbReference type="GO" id="GO:0000993">
    <property type="term" value="F:RNA polymerase II complex binding"/>
    <property type="evidence" value="ECO:0000318"/>
    <property type="project" value="GO_Central"/>
</dbReference>
<dbReference type="GO" id="GO:0003711">
    <property type="term" value="F:transcription elongation factor activity"/>
    <property type="evidence" value="ECO:0000269"/>
    <property type="project" value="PomBase"/>
</dbReference>
<dbReference type="GO" id="GO:0008270">
    <property type="term" value="F:zinc ion binding"/>
    <property type="evidence" value="ECO:0000266"/>
    <property type="project" value="PomBase"/>
</dbReference>
<dbReference type="GO" id="GO:0006397">
    <property type="term" value="P:mRNA processing"/>
    <property type="evidence" value="ECO:0007669"/>
    <property type="project" value="UniProtKB-KW"/>
</dbReference>
<dbReference type="GO" id="GO:0006355">
    <property type="term" value="P:regulation of DNA-templated transcription"/>
    <property type="evidence" value="ECO:0007669"/>
    <property type="project" value="InterPro"/>
</dbReference>
<dbReference type="GO" id="GO:0006368">
    <property type="term" value="P:transcription elongation by RNA polymerase II"/>
    <property type="evidence" value="ECO:0000316"/>
    <property type="project" value="PomBase"/>
</dbReference>
<dbReference type="GO" id="GO:0140673">
    <property type="term" value="P:transcription elongation-coupled chromatin remodeling"/>
    <property type="evidence" value="ECO:0007669"/>
    <property type="project" value="InterPro"/>
</dbReference>
<dbReference type="CDD" id="cd07973">
    <property type="entry name" value="Spt4"/>
    <property type="match status" value="1"/>
</dbReference>
<dbReference type="FunFam" id="3.30.40.210:FF:000003">
    <property type="entry name" value="Transcription elongation factor SPT4"/>
    <property type="match status" value="1"/>
</dbReference>
<dbReference type="Gene3D" id="3.30.40.210">
    <property type="match status" value="1"/>
</dbReference>
<dbReference type="InterPro" id="IPR029040">
    <property type="entry name" value="RPABC4/Spt4"/>
</dbReference>
<dbReference type="InterPro" id="IPR009287">
    <property type="entry name" value="Spt4"/>
</dbReference>
<dbReference type="InterPro" id="IPR022800">
    <property type="entry name" value="Spt4/RpoE2_Znf"/>
</dbReference>
<dbReference type="InterPro" id="IPR038510">
    <property type="entry name" value="Spt4_sf"/>
</dbReference>
<dbReference type="PANTHER" id="PTHR12882">
    <property type="entry name" value="SUPPRESSOR OF TY 4"/>
    <property type="match status" value="1"/>
</dbReference>
<dbReference type="PANTHER" id="PTHR12882:SF1">
    <property type="entry name" value="TRANSCRIPTION ELONGATION FACTOR SPT4"/>
    <property type="match status" value="1"/>
</dbReference>
<dbReference type="Pfam" id="PF06093">
    <property type="entry name" value="Spt4"/>
    <property type="match status" value="1"/>
</dbReference>
<dbReference type="PIRSF" id="PIRSF025023">
    <property type="entry name" value="Spt4"/>
    <property type="match status" value="1"/>
</dbReference>
<dbReference type="SMART" id="SM01389">
    <property type="entry name" value="Spt4"/>
    <property type="match status" value="1"/>
</dbReference>
<dbReference type="SUPFAM" id="SSF63393">
    <property type="entry name" value="RNA polymerase subunits"/>
    <property type="match status" value="1"/>
</dbReference>
<reference key="1">
    <citation type="journal article" date="2002" name="Nature">
        <title>The genome sequence of Schizosaccharomyces pombe.</title>
        <authorList>
            <person name="Wood V."/>
            <person name="Gwilliam R."/>
            <person name="Rajandream M.A."/>
            <person name="Lyne M.H."/>
            <person name="Lyne R."/>
            <person name="Stewart A."/>
            <person name="Sgouros J.G."/>
            <person name="Peat N."/>
            <person name="Hayles J."/>
            <person name="Baker S.G."/>
            <person name="Basham D."/>
            <person name="Bowman S."/>
            <person name="Brooks K."/>
            <person name="Brown D."/>
            <person name="Brown S."/>
            <person name="Chillingworth T."/>
            <person name="Churcher C.M."/>
            <person name="Collins M."/>
            <person name="Connor R."/>
            <person name="Cronin A."/>
            <person name="Davis P."/>
            <person name="Feltwell T."/>
            <person name="Fraser A."/>
            <person name="Gentles S."/>
            <person name="Goble A."/>
            <person name="Hamlin N."/>
            <person name="Harris D.E."/>
            <person name="Hidalgo J."/>
            <person name="Hodgson G."/>
            <person name="Holroyd S."/>
            <person name="Hornsby T."/>
            <person name="Howarth S."/>
            <person name="Huckle E.J."/>
            <person name="Hunt S."/>
            <person name="Jagels K."/>
            <person name="James K.D."/>
            <person name="Jones L."/>
            <person name="Jones M."/>
            <person name="Leather S."/>
            <person name="McDonald S."/>
            <person name="McLean J."/>
            <person name="Mooney P."/>
            <person name="Moule S."/>
            <person name="Mungall K.L."/>
            <person name="Murphy L.D."/>
            <person name="Niblett D."/>
            <person name="Odell C."/>
            <person name="Oliver K."/>
            <person name="O'Neil S."/>
            <person name="Pearson D."/>
            <person name="Quail M.A."/>
            <person name="Rabbinowitsch E."/>
            <person name="Rutherford K.M."/>
            <person name="Rutter S."/>
            <person name="Saunders D."/>
            <person name="Seeger K."/>
            <person name="Sharp S."/>
            <person name="Skelton J."/>
            <person name="Simmonds M.N."/>
            <person name="Squares R."/>
            <person name="Squares S."/>
            <person name="Stevens K."/>
            <person name="Taylor K."/>
            <person name="Taylor R.G."/>
            <person name="Tivey A."/>
            <person name="Walsh S.V."/>
            <person name="Warren T."/>
            <person name="Whitehead S."/>
            <person name="Woodward J.R."/>
            <person name="Volckaert G."/>
            <person name="Aert R."/>
            <person name="Robben J."/>
            <person name="Grymonprez B."/>
            <person name="Weltjens I."/>
            <person name="Vanstreels E."/>
            <person name="Rieger M."/>
            <person name="Schaefer M."/>
            <person name="Mueller-Auer S."/>
            <person name="Gabel C."/>
            <person name="Fuchs M."/>
            <person name="Duesterhoeft A."/>
            <person name="Fritzc C."/>
            <person name="Holzer E."/>
            <person name="Moestl D."/>
            <person name="Hilbert H."/>
            <person name="Borzym K."/>
            <person name="Langer I."/>
            <person name="Beck A."/>
            <person name="Lehrach H."/>
            <person name="Reinhardt R."/>
            <person name="Pohl T.M."/>
            <person name="Eger P."/>
            <person name="Zimmermann W."/>
            <person name="Wedler H."/>
            <person name="Wambutt R."/>
            <person name="Purnelle B."/>
            <person name="Goffeau A."/>
            <person name="Cadieu E."/>
            <person name="Dreano S."/>
            <person name="Gloux S."/>
            <person name="Lelaure V."/>
            <person name="Mottier S."/>
            <person name="Galibert F."/>
            <person name="Aves S.J."/>
            <person name="Xiang Z."/>
            <person name="Hunt C."/>
            <person name="Moore K."/>
            <person name="Hurst S.M."/>
            <person name="Lucas M."/>
            <person name="Rochet M."/>
            <person name="Gaillardin C."/>
            <person name="Tallada V.A."/>
            <person name="Garzon A."/>
            <person name="Thode G."/>
            <person name="Daga R.R."/>
            <person name="Cruzado L."/>
            <person name="Jimenez J."/>
            <person name="Sanchez M."/>
            <person name="del Rey F."/>
            <person name="Benito J."/>
            <person name="Dominguez A."/>
            <person name="Revuelta J.L."/>
            <person name="Moreno S."/>
            <person name="Armstrong J."/>
            <person name="Forsburg S.L."/>
            <person name="Cerutti L."/>
            <person name="Lowe T."/>
            <person name="McCombie W.R."/>
            <person name="Paulsen I."/>
            <person name="Potashkin J."/>
            <person name="Shpakovski G.V."/>
            <person name="Ussery D."/>
            <person name="Barrell B.G."/>
            <person name="Nurse P."/>
        </authorList>
    </citation>
    <scope>NUCLEOTIDE SEQUENCE [LARGE SCALE GENOMIC DNA]</scope>
    <source>
        <strain>972 / ATCC 24843</strain>
    </source>
</reference>
<reference key="2">
    <citation type="journal article" date="2002" name="J. Biol. Chem.">
        <title>Interactions between fission yeast mRNA capping enzymes and elongation factor Spt5.</title>
        <authorList>
            <person name="Pei Y."/>
            <person name="Shuman S."/>
        </authorList>
    </citation>
    <scope>INTERACTION WITH SPT5</scope>
</reference>
<comment type="function">
    <text evidence="1">The spt4-spt5 complex mediates both activation and inhibition of transcription elongation, and plays a role in pre-mRNA processing. This complex seems to be important for the stability of the RNA polymerase II elongation machinery on the chromatin template but not for the inherent ability of this machinery to translocate down the gene (By similarity).</text>
</comment>
<comment type="subunit">
    <text evidence="1">Component of the spt4-spt5 complex. Interacts with RNA polymerase II (By similarity).</text>
</comment>
<comment type="subcellular location">
    <subcellularLocation>
        <location evidence="1">Nucleus</location>
    </subcellularLocation>
    <subcellularLocation>
        <location evidence="1">Chromosome</location>
        <location evidence="1">Centromere</location>
    </subcellularLocation>
    <text evidence="1">Centromere and heterochromatin.</text>
</comment>
<comment type="similarity">
    <text evidence="2">Belongs to the SPT4 family.</text>
</comment>
<keyword id="KW-0137">Centromere</keyword>
<keyword id="KW-0158">Chromosome</keyword>
<keyword id="KW-0507">mRNA processing</keyword>
<keyword id="KW-0539">Nucleus</keyword>
<keyword id="KW-1185">Reference proteome</keyword>
<keyword id="KW-0804">Transcription</keyword>
<sequence length="105" mass="11879">MDKLNRTRSRACLICGIVLPHSVFANKGCPNDGVDDVETFTSPVFEGIMAMMSPTESWVARWQRIDTFTPGIYATRVQGVLNEDVVESLRRRGINYRPRNGTSWD</sequence>
<gene>
    <name type="primary">spt4</name>
    <name type="ORF">SPBC21C3.16c</name>
</gene>
<accession>Q9P7K8</accession>
<name>SPT4_SCHPO</name>
<organism>
    <name type="scientific">Schizosaccharomyces pombe (strain 972 / ATCC 24843)</name>
    <name type="common">Fission yeast</name>
    <dbReference type="NCBI Taxonomy" id="284812"/>
    <lineage>
        <taxon>Eukaryota</taxon>
        <taxon>Fungi</taxon>
        <taxon>Dikarya</taxon>
        <taxon>Ascomycota</taxon>
        <taxon>Taphrinomycotina</taxon>
        <taxon>Schizosaccharomycetes</taxon>
        <taxon>Schizosaccharomycetales</taxon>
        <taxon>Schizosaccharomycetaceae</taxon>
        <taxon>Schizosaccharomyces</taxon>
    </lineage>
</organism>